<organism>
    <name type="scientific">Rhodopseudomonas palustris (strain HaA2)</name>
    <dbReference type="NCBI Taxonomy" id="316058"/>
    <lineage>
        <taxon>Bacteria</taxon>
        <taxon>Pseudomonadati</taxon>
        <taxon>Pseudomonadota</taxon>
        <taxon>Alphaproteobacteria</taxon>
        <taxon>Hyphomicrobiales</taxon>
        <taxon>Nitrobacteraceae</taxon>
        <taxon>Rhodopseudomonas</taxon>
    </lineage>
</organism>
<evidence type="ECO:0000255" key="1">
    <source>
        <dbReference type="HAMAP-Rule" id="MF_01959"/>
    </source>
</evidence>
<evidence type="ECO:0000256" key="2">
    <source>
        <dbReference type="SAM" id="MobiDB-lite"/>
    </source>
</evidence>
<reference key="1">
    <citation type="submission" date="2006-01" db="EMBL/GenBank/DDBJ databases">
        <title>Complete sequence of Rhodopseudomonas palustris HaA2.</title>
        <authorList>
            <consortium name="US DOE Joint Genome Institute"/>
            <person name="Copeland A."/>
            <person name="Lucas S."/>
            <person name="Lapidus A."/>
            <person name="Barry K."/>
            <person name="Detter J.C."/>
            <person name="Glavina T."/>
            <person name="Hammon N."/>
            <person name="Israni S."/>
            <person name="Pitluck S."/>
            <person name="Chain P."/>
            <person name="Malfatti S."/>
            <person name="Shin M."/>
            <person name="Vergez L."/>
            <person name="Schmutz J."/>
            <person name="Larimer F."/>
            <person name="Land M."/>
            <person name="Hauser L."/>
            <person name="Pelletier D.A."/>
            <person name="Kyrpides N."/>
            <person name="Anderson I."/>
            <person name="Oda Y."/>
            <person name="Harwood C.S."/>
            <person name="Richardson P."/>
        </authorList>
    </citation>
    <scope>NUCLEOTIDE SEQUENCE [LARGE SCALE GENOMIC DNA]</scope>
    <source>
        <strain>HaA2</strain>
    </source>
</reference>
<comment type="function">
    <text evidence="1">Heme chaperone required for the biogenesis of c-type cytochromes. Transiently binds heme delivered by CcmC and transfers the heme to apo-cytochromes in a process facilitated by CcmF and CcmH.</text>
</comment>
<comment type="subcellular location">
    <subcellularLocation>
        <location evidence="1">Cell inner membrane</location>
        <topology evidence="1">Single-pass type II membrane protein</topology>
        <orientation evidence="1">Periplasmic side</orientation>
    </subcellularLocation>
</comment>
<comment type="similarity">
    <text evidence="1">Belongs to the CcmE/CycJ family.</text>
</comment>
<keyword id="KW-0997">Cell inner membrane</keyword>
<keyword id="KW-1003">Cell membrane</keyword>
<keyword id="KW-0201">Cytochrome c-type biogenesis</keyword>
<keyword id="KW-0349">Heme</keyword>
<keyword id="KW-0408">Iron</keyword>
<keyword id="KW-0472">Membrane</keyword>
<keyword id="KW-0479">Metal-binding</keyword>
<keyword id="KW-1185">Reference proteome</keyword>
<keyword id="KW-0735">Signal-anchor</keyword>
<keyword id="KW-0812">Transmembrane</keyword>
<keyword id="KW-1133">Transmembrane helix</keyword>
<name>CCME_RHOP2</name>
<protein>
    <recommendedName>
        <fullName evidence="1">Cytochrome c-type biogenesis protein CcmE</fullName>
    </recommendedName>
    <alternativeName>
        <fullName evidence="1">Cytochrome c maturation protein E</fullName>
    </alternativeName>
    <alternativeName>
        <fullName evidence="1">Heme chaperone CcmE</fullName>
    </alternativeName>
</protein>
<proteinExistence type="inferred from homology"/>
<feature type="chain" id="PRO_1000070839" description="Cytochrome c-type biogenesis protein CcmE">
    <location>
        <begin position="1"/>
        <end position="165"/>
    </location>
</feature>
<feature type="topological domain" description="Cytoplasmic" evidence="1">
    <location>
        <begin position="1"/>
        <end position="7"/>
    </location>
</feature>
<feature type="transmembrane region" description="Helical; Signal-anchor for type II membrane protein" evidence="1">
    <location>
        <begin position="8"/>
        <end position="28"/>
    </location>
</feature>
<feature type="topological domain" description="Periplasmic" evidence="1">
    <location>
        <begin position="29"/>
        <end position="165"/>
    </location>
</feature>
<feature type="region of interest" description="Disordered" evidence="2">
    <location>
        <begin position="138"/>
        <end position="165"/>
    </location>
</feature>
<feature type="compositionally biased region" description="Basic and acidic residues" evidence="2">
    <location>
        <begin position="138"/>
        <end position="149"/>
    </location>
</feature>
<feature type="compositionally biased region" description="Low complexity" evidence="2">
    <location>
        <begin position="153"/>
        <end position="165"/>
    </location>
</feature>
<feature type="binding site" description="covalent" evidence="1">
    <location>
        <position position="122"/>
    </location>
    <ligand>
        <name>heme</name>
        <dbReference type="ChEBI" id="CHEBI:30413"/>
    </ligand>
</feature>
<feature type="binding site" description="axial binding residue" evidence="1">
    <location>
        <position position="126"/>
    </location>
    <ligand>
        <name>heme</name>
        <dbReference type="ChEBI" id="CHEBI:30413"/>
    </ligand>
    <ligandPart>
        <name>Fe</name>
        <dbReference type="ChEBI" id="CHEBI:18248"/>
    </ligandPart>
</feature>
<gene>
    <name evidence="1" type="primary">ccmE</name>
    <name evidence="1" type="synonym">cycJ</name>
    <name type="ordered locus">RPB_3449</name>
</gene>
<dbReference type="EMBL" id="CP000250">
    <property type="protein sequence ID" value="ABD08145.1"/>
    <property type="molecule type" value="Genomic_DNA"/>
</dbReference>
<dbReference type="RefSeq" id="WP_011442329.1">
    <property type="nucleotide sequence ID" value="NC_007778.1"/>
</dbReference>
<dbReference type="SMR" id="Q2IUG5"/>
<dbReference type="STRING" id="316058.RPB_3449"/>
<dbReference type="KEGG" id="rpb:RPB_3449"/>
<dbReference type="eggNOG" id="COG2332">
    <property type="taxonomic scope" value="Bacteria"/>
</dbReference>
<dbReference type="HOGENOM" id="CLU_079503_1_1_5"/>
<dbReference type="OrthoDB" id="9793584at2"/>
<dbReference type="Proteomes" id="UP000008809">
    <property type="component" value="Chromosome"/>
</dbReference>
<dbReference type="GO" id="GO:0005886">
    <property type="term" value="C:plasma membrane"/>
    <property type="evidence" value="ECO:0007669"/>
    <property type="project" value="UniProtKB-SubCell"/>
</dbReference>
<dbReference type="GO" id="GO:0020037">
    <property type="term" value="F:heme binding"/>
    <property type="evidence" value="ECO:0007669"/>
    <property type="project" value="InterPro"/>
</dbReference>
<dbReference type="GO" id="GO:0046872">
    <property type="term" value="F:metal ion binding"/>
    <property type="evidence" value="ECO:0007669"/>
    <property type="project" value="UniProtKB-KW"/>
</dbReference>
<dbReference type="GO" id="GO:0017004">
    <property type="term" value="P:cytochrome complex assembly"/>
    <property type="evidence" value="ECO:0007669"/>
    <property type="project" value="UniProtKB-KW"/>
</dbReference>
<dbReference type="Gene3D" id="2.40.50.140">
    <property type="entry name" value="Nucleic acid-binding proteins"/>
    <property type="match status" value="1"/>
</dbReference>
<dbReference type="HAMAP" id="MF_01959">
    <property type="entry name" value="CcmE"/>
    <property type="match status" value="1"/>
</dbReference>
<dbReference type="InterPro" id="IPR004329">
    <property type="entry name" value="CcmE"/>
</dbReference>
<dbReference type="InterPro" id="IPR036127">
    <property type="entry name" value="CcmE-like_sf"/>
</dbReference>
<dbReference type="InterPro" id="IPR012340">
    <property type="entry name" value="NA-bd_OB-fold"/>
</dbReference>
<dbReference type="NCBIfam" id="NF009727">
    <property type="entry name" value="PRK13254.1-1"/>
    <property type="match status" value="1"/>
</dbReference>
<dbReference type="NCBIfam" id="NF009731">
    <property type="entry name" value="PRK13254.1-5"/>
    <property type="match status" value="1"/>
</dbReference>
<dbReference type="PANTHER" id="PTHR34128">
    <property type="entry name" value="CYTOCHROME C-TYPE BIOGENESIS PROTEIN CCME HOMOLOG, MITOCHONDRIAL"/>
    <property type="match status" value="1"/>
</dbReference>
<dbReference type="PANTHER" id="PTHR34128:SF2">
    <property type="entry name" value="CYTOCHROME C-TYPE BIOGENESIS PROTEIN CCME HOMOLOG, MITOCHONDRIAL"/>
    <property type="match status" value="1"/>
</dbReference>
<dbReference type="Pfam" id="PF03100">
    <property type="entry name" value="CcmE"/>
    <property type="match status" value="1"/>
</dbReference>
<dbReference type="SUPFAM" id="SSF82093">
    <property type="entry name" value="Heme chaperone CcmE"/>
    <property type="match status" value="1"/>
</dbReference>
<accession>Q2IUG5</accession>
<sequence length="165" mass="17574">MTRKQRRLMMIGGAGVVLVVAVGLVLNAMRGSIVFFSTPKMVHEQNIEAGKRFRLGGVVEPGSLTRGDQLAVAFKVSDGDATVPVAFKGILPDLFREGQGVIAEGALDTAGVFKADTVLAKHDETYMPKDVADALKKQGHWKDDYEKKPPGPGAAASADAMRPAR</sequence>